<accession>Q57254</accession>
<comment type="function">
    <text>Hemagglutinins of uropathogenic E.coli mediate adherence to the upper urinary tract. These adhesins bind to the Dr blood group antigen and also agglutinate human erythrocytes in the presence of D-mannose (mannose-resistant hemagglutination (MRHA)).</text>
</comment>
<comment type="subcellular location">
    <subcellularLocation>
        <location>Fimbrium</location>
    </subcellularLocation>
</comment>
<comment type="similarity">
    <text evidence="3">Belongs to the Dr-adhesin family.</text>
</comment>
<reference key="1">
    <citation type="journal article" date="1994" name="J. Bacteriol.">
        <title>Nucleotide sequence of the afimbrial-adhesin-encoding afa-3 gene cluster and its translocation via flanking IS1 insertion sequences.</title>
        <authorList>
            <person name="Garcia M.-I."/>
            <person name="Labigne A."/>
            <person name="le Bouguenec C.L."/>
        </authorList>
    </citation>
    <scope>NUCLEOTIDE SEQUENCE [GENOMIC DNA]</scope>
    <source>
        <strain>A30 / UPEC</strain>
    </source>
</reference>
<reference key="2">
    <citation type="journal article" date="1993" name="Infect. Immun.">
        <title>Characterization of plasmid-borne afa-3 gene clusters encoding afimbrial adhesins expressed by Escherichia coli strains associated with intestinal or urinary tract infections.</title>
        <authorList>
            <person name="le Bouguenec C.L."/>
            <person name="Garcia M.-I."/>
            <person name="Ouin V."/>
            <person name="Desperrier J.-M."/>
            <person name="Gounon P."/>
            <person name="Labigne A."/>
        </authorList>
    </citation>
    <scope>NUCLEOTIDE SEQUENCE [GENOMIC DNA]</scope>
    <scope>CHARACTERIZATION</scope>
    <source>
        <strain>A30 / UPEC</strain>
        <strain>AL845</strain>
        <strain>AL847</strain>
    </source>
</reference>
<proteinExistence type="evidence at protein level"/>
<keyword id="KW-0002">3D-structure</keyword>
<keyword id="KW-0281">Fimbrium</keyword>
<keyword id="KW-0614">Plasmid</keyword>
<keyword id="KW-0732">Signal</keyword>
<name>AFAE3_ECOLX</name>
<gene>
    <name type="primary">afaE3</name>
    <name type="synonym">afaE-3</name>
</gene>
<feature type="signal peptide" evidence="2">
    <location>
        <begin position="1"/>
        <end position="21"/>
    </location>
</feature>
<feature type="chain" id="PRO_0000000873" description="Afimbrial adhesin AFA-III">
    <location>
        <begin position="22"/>
        <end position="160"/>
    </location>
</feature>
<feature type="region of interest" description="Receptor-binding" evidence="1">
    <location>
        <begin position="22"/>
        <end position="75"/>
    </location>
</feature>
<feature type="sequence variant" description="In strain: AL847.">
    <original>A</original>
    <variation>T</variation>
    <location>
        <position position="59"/>
    </location>
</feature>
<feature type="sequence variant" description="In strain: AL845 and AL847; chloramphenicol-sensitive.">
    <original>N</original>
    <variation>D</variation>
    <location>
        <position position="73"/>
    </location>
</feature>
<feature type="strand" evidence="5">
    <location>
        <begin position="22"/>
        <end position="37"/>
    </location>
</feature>
<feature type="strand" evidence="6">
    <location>
        <begin position="39"/>
        <end position="46"/>
    </location>
</feature>
<feature type="strand" evidence="5">
    <location>
        <begin position="50"/>
        <end position="52"/>
    </location>
</feature>
<feature type="helix" evidence="5">
    <location>
        <begin position="53"/>
        <end position="55"/>
    </location>
</feature>
<feature type="strand" evidence="5">
    <location>
        <begin position="61"/>
        <end position="68"/>
    </location>
</feature>
<feature type="strand" evidence="5">
    <location>
        <begin position="75"/>
        <end position="81"/>
    </location>
</feature>
<feature type="helix" evidence="6">
    <location>
        <begin position="83"/>
        <end position="85"/>
    </location>
</feature>
<feature type="strand" evidence="4">
    <location>
        <begin position="86"/>
        <end position="89"/>
    </location>
</feature>
<feature type="strand" evidence="5">
    <location>
        <begin position="91"/>
        <end position="95"/>
    </location>
</feature>
<feature type="strand" evidence="5">
    <location>
        <begin position="101"/>
        <end position="111"/>
    </location>
</feature>
<feature type="strand" evidence="5">
    <location>
        <begin position="114"/>
        <end position="117"/>
    </location>
</feature>
<feature type="strand" evidence="5">
    <location>
        <begin position="120"/>
        <end position="125"/>
    </location>
</feature>
<feature type="strand" evidence="5">
    <location>
        <begin position="130"/>
        <end position="139"/>
    </location>
</feature>
<feature type="strand" evidence="5">
    <location>
        <begin position="146"/>
        <end position="159"/>
    </location>
</feature>
<protein>
    <recommendedName>
        <fullName>Afimbrial adhesin AFA-III</fullName>
    </recommendedName>
</protein>
<dbReference type="EMBL" id="X76688">
    <property type="protein sequence ID" value="CAA54121.1"/>
    <property type="molecule type" value="Genomic_DNA"/>
</dbReference>
<dbReference type="EMBL" id="X69102">
    <property type="protein sequence ID" value="CAA48847.1"/>
    <property type="molecule type" value="Genomic_DNA"/>
</dbReference>
<dbReference type="PIR" id="H55545">
    <property type="entry name" value="H55545"/>
</dbReference>
<dbReference type="PDB" id="1RXL">
    <property type="method" value="NMR"/>
    <property type="chains" value="A=38-160"/>
</dbReference>
<dbReference type="PDB" id="1USZ">
    <property type="method" value="X-ray"/>
    <property type="resolution" value="3.28 A"/>
    <property type="chains" value="A=21-160"/>
</dbReference>
<dbReference type="PDB" id="1UT2">
    <property type="method" value="X-ray"/>
    <property type="resolution" value="3.30 A"/>
    <property type="chains" value="A/B/C/D/E/F/G/H/I=21-160"/>
</dbReference>
<dbReference type="PDB" id="2IXQ">
    <property type="method" value="NMR"/>
    <property type="chains" value="B=38-160"/>
</dbReference>
<dbReference type="PDB" id="2VER">
    <property type="method" value="NMR"/>
    <property type="chains" value="A=38-160"/>
</dbReference>
<dbReference type="PDBsum" id="1RXL"/>
<dbReference type="PDBsum" id="1USZ"/>
<dbReference type="PDBsum" id="1UT2"/>
<dbReference type="PDBsum" id="2IXQ"/>
<dbReference type="PDBsum" id="2VER"/>
<dbReference type="BMRB" id="Q57254"/>
<dbReference type="SMR" id="Q57254"/>
<dbReference type="IntAct" id="Q57254">
    <property type="interactions" value="1"/>
</dbReference>
<dbReference type="DrugBank" id="DB08217">
    <property type="generic name" value="S-[(1-Hydroxy-2,2,5,5-tetramethyl-2,5-dihydro-1H-pyrrol-3-yl)methyl] methanesulfonothioate"/>
</dbReference>
<dbReference type="EvolutionaryTrace" id="Q57254"/>
<dbReference type="GO" id="GO:0009289">
    <property type="term" value="C:pilus"/>
    <property type="evidence" value="ECO:0007669"/>
    <property type="project" value="UniProtKB-SubCell"/>
</dbReference>
<dbReference type="Gene3D" id="2.60.40.1570">
    <property type="entry name" value="Dr adhesin"/>
    <property type="match status" value="1"/>
</dbReference>
<dbReference type="InterPro" id="IPR006713">
    <property type="entry name" value="Adhesin_Dr"/>
</dbReference>
<dbReference type="InterPro" id="IPR021020">
    <property type="entry name" value="Adhesin_Dr_signal_peptide"/>
</dbReference>
<dbReference type="InterPro" id="IPR008966">
    <property type="entry name" value="Adhesion_dom_sf"/>
</dbReference>
<dbReference type="InterPro" id="IPR037028">
    <property type="entry name" value="Dr_adhesin_sf"/>
</dbReference>
<dbReference type="Pfam" id="PF04619">
    <property type="entry name" value="Adhesin_Dr"/>
    <property type="match status" value="1"/>
</dbReference>
<dbReference type="Pfam" id="PF12393">
    <property type="entry name" value="Dr_adhesin"/>
    <property type="match status" value="1"/>
</dbReference>
<dbReference type="SUPFAM" id="SSF49401">
    <property type="entry name" value="Bacterial adhesins"/>
    <property type="match status" value="1"/>
</dbReference>
<geneLocation type="plasmid">
    <name>pIL1055</name>
</geneLocation>
<evidence type="ECO:0000250" key="1"/>
<evidence type="ECO:0000255" key="2"/>
<evidence type="ECO:0000305" key="3"/>
<evidence type="ECO:0007829" key="4">
    <source>
        <dbReference type="PDB" id="1RXL"/>
    </source>
</evidence>
<evidence type="ECO:0007829" key="5">
    <source>
        <dbReference type="PDB" id="1USZ"/>
    </source>
</evidence>
<evidence type="ECO:0007829" key="6">
    <source>
        <dbReference type="PDB" id="1UT2"/>
    </source>
</evidence>
<organism>
    <name type="scientific">Escherichia coli</name>
    <dbReference type="NCBI Taxonomy" id="562"/>
    <lineage>
        <taxon>Bacteria</taxon>
        <taxon>Pseudomonadati</taxon>
        <taxon>Pseudomonadota</taxon>
        <taxon>Gammaproteobacteria</taxon>
        <taxon>Enterobacterales</taxon>
        <taxon>Enterobacteriaceae</taxon>
        <taxon>Escherichia</taxon>
    </lineage>
</organism>
<sequence>MKKLAIMAAASMVFAVSSAHAGFTPSGTTGTTKLTVTEECQVRVGDLTVAKTRGQLTDAAPIGPVTVQALGCNARQVALKADTDNFEQGKFFLISDNNRDKLYVNIRPMDNSAWTTDNGVFYKNDVGSWGGTIGIYVDGQQTNTPPGNYTLTLTGGYWAK</sequence>